<feature type="chain" id="PRO_1000081435" description="Small ribosomal subunit protein bS20">
    <location>
        <begin position="1"/>
        <end position="87"/>
    </location>
</feature>
<feature type="region of interest" description="Disordered" evidence="2">
    <location>
        <begin position="1"/>
        <end position="22"/>
    </location>
</feature>
<feature type="compositionally biased region" description="Basic residues" evidence="2">
    <location>
        <begin position="7"/>
        <end position="19"/>
    </location>
</feature>
<accession>A6W349</accession>
<comment type="function">
    <text evidence="1">Binds directly to 16S ribosomal RNA.</text>
</comment>
<comment type="similarity">
    <text evidence="1">Belongs to the bacterial ribosomal protein bS20 family.</text>
</comment>
<protein>
    <recommendedName>
        <fullName evidence="1">Small ribosomal subunit protein bS20</fullName>
    </recommendedName>
    <alternativeName>
        <fullName evidence="3">30S ribosomal protein S20</fullName>
    </alternativeName>
</protein>
<dbReference type="EMBL" id="CP000749">
    <property type="protein sequence ID" value="ABR73128.1"/>
    <property type="molecule type" value="Genomic_DNA"/>
</dbReference>
<dbReference type="SMR" id="A6W349"/>
<dbReference type="STRING" id="400668.Mmwyl1_4233"/>
<dbReference type="KEGG" id="mmw:Mmwyl1_4233"/>
<dbReference type="eggNOG" id="COG0268">
    <property type="taxonomic scope" value="Bacteria"/>
</dbReference>
<dbReference type="HOGENOM" id="CLU_160655_4_0_6"/>
<dbReference type="OrthoDB" id="9807974at2"/>
<dbReference type="GO" id="GO:0005829">
    <property type="term" value="C:cytosol"/>
    <property type="evidence" value="ECO:0007669"/>
    <property type="project" value="TreeGrafter"/>
</dbReference>
<dbReference type="GO" id="GO:0015935">
    <property type="term" value="C:small ribosomal subunit"/>
    <property type="evidence" value="ECO:0007669"/>
    <property type="project" value="TreeGrafter"/>
</dbReference>
<dbReference type="GO" id="GO:0070181">
    <property type="term" value="F:small ribosomal subunit rRNA binding"/>
    <property type="evidence" value="ECO:0007669"/>
    <property type="project" value="TreeGrafter"/>
</dbReference>
<dbReference type="GO" id="GO:0003735">
    <property type="term" value="F:structural constituent of ribosome"/>
    <property type="evidence" value="ECO:0007669"/>
    <property type="project" value="InterPro"/>
</dbReference>
<dbReference type="GO" id="GO:0006412">
    <property type="term" value="P:translation"/>
    <property type="evidence" value="ECO:0007669"/>
    <property type="project" value="UniProtKB-UniRule"/>
</dbReference>
<dbReference type="FunFam" id="1.20.58.110:FF:000001">
    <property type="entry name" value="30S ribosomal protein S20"/>
    <property type="match status" value="1"/>
</dbReference>
<dbReference type="Gene3D" id="1.20.58.110">
    <property type="entry name" value="Ribosomal protein S20"/>
    <property type="match status" value="1"/>
</dbReference>
<dbReference type="HAMAP" id="MF_00500">
    <property type="entry name" value="Ribosomal_bS20"/>
    <property type="match status" value="1"/>
</dbReference>
<dbReference type="InterPro" id="IPR002583">
    <property type="entry name" value="Ribosomal_bS20"/>
</dbReference>
<dbReference type="InterPro" id="IPR036510">
    <property type="entry name" value="Ribosomal_bS20_sf"/>
</dbReference>
<dbReference type="NCBIfam" id="TIGR00029">
    <property type="entry name" value="S20"/>
    <property type="match status" value="1"/>
</dbReference>
<dbReference type="PANTHER" id="PTHR33398">
    <property type="entry name" value="30S RIBOSOMAL PROTEIN S20"/>
    <property type="match status" value="1"/>
</dbReference>
<dbReference type="PANTHER" id="PTHR33398:SF1">
    <property type="entry name" value="SMALL RIBOSOMAL SUBUNIT PROTEIN BS20C"/>
    <property type="match status" value="1"/>
</dbReference>
<dbReference type="Pfam" id="PF01649">
    <property type="entry name" value="Ribosomal_S20p"/>
    <property type="match status" value="1"/>
</dbReference>
<dbReference type="SUPFAM" id="SSF46992">
    <property type="entry name" value="Ribosomal protein S20"/>
    <property type="match status" value="1"/>
</dbReference>
<keyword id="KW-0687">Ribonucleoprotein</keyword>
<keyword id="KW-0689">Ribosomal protein</keyword>
<keyword id="KW-0694">RNA-binding</keyword>
<keyword id="KW-0699">rRNA-binding</keyword>
<sequence length="87" mass="9335">MANSAGSKKRARQAVKSRAHNGSLRSMVRTYLKKVDAAIEAGNQADAQAAYVLATSKLDKAADKGLYHKNKAARHKSRLSAKIKALA</sequence>
<evidence type="ECO:0000255" key="1">
    <source>
        <dbReference type="HAMAP-Rule" id="MF_00500"/>
    </source>
</evidence>
<evidence type="ECO:0000256" key="2">
    <source>
        <dbReference type="SAM" id="MobiDB-lite"/>
    </source>
</evidence>
<evidence type="ECO:0000305" key="3"/>
<name>RS20_MARMS</name>
<proteinExistence type="inferred from homology"/>
<reference key="1">
    <citation type="submission" date="2007-06" db="EMBL/GenBank/DDBJ databases">
        <title>Complete sequence of Marinomonas sp. MWYL1.</title>
        <authorList>
            <consortium name="US DOE Joint Genome Institute"/>
            <person name="Copeland A."/>
            <person name="Lucas S."/>
            <person name="Lapidus A."/>
            <person name="Barry K."/>
            <person name="Glavina del Rio T."/>
            <person name="Dalin E."/>
            <person name="Tice H."/>
            <person name="Pitluck S."/>
            <person name="Kiss H."/>
            <person name="Brettin T."/>
            <person name="Bruce D."/>
            <person name="Detter J.C."/>
            <person name="Han C."/>
            <person name="Schmutz J."/>
            <person name="Larimer F."/>
            <person name="Land M."/>
            <person name="Hauser L."/>
            <person name="Kyrpides N."/>
            <person name="Kim E."/>
            <person name="Johnston A.W.B."/>
            <person name="Todd J.D."/>
            <person name="Rogers R."/>
            <person name="Wexler M."/>
            <person name="Bond P.L."/>
            <person name="Li Y."/>
            <person name="Richardson P."/>
        </authorList>
    </citation>
    <scope>NUCLEOTIDE SEQUENCE [LARGE SCALE GENOMIC DNA]</scope>
    <source>
        <strain>MWYL1</strain>
    </source>
</reference>
<organism>
    <name type="scientific">Marinomonas sp. (strain MWYL1)</name>
    <dbReference type="NCBI Taxonomy" id="400668"/>
    <lineage>
        <taxon>Bacteria</taxon>
        <taxon>Pseudomonadati</taxon>
        <taxon>Pseudomonadota</taxon>
        <taxon>Gammaproteobacteria</taxon>
        <taxon>Oceanospirillales</taxon>
        <taxon>Oceanospirillaceae</taxon>
        <taxon>Marinomonas</taxon>
    </lineage>
</organism>
<gene>
    <name evidence="1" type="primary">rpsT</name>
    <name type="ordered locus">Mmwyl1_4233</name>
</gene>